<protein>
    <recommendedName>
        <fullName>Gamma-crystallin S</fullName>
    </recommendedName>
    <alternativeName>
        <fullName>Beta-crystallin S</fullName>
    </alternativeName>
    <alternativeName>
        <fullName>Gamma-S-crystallin</fullName>
    </alternativeName>
</protein>
<feature type="initiator methionine" description="Removed" evidence="2">
    <location>
        <position position="1"/>
    </location>
</feature>
<feature type="chain" id="PRO_0000057566" description="Gamma-crystallin S">
    <location>
        <begin position="2"/>
        <end position="178"/>
    </location>
</feature>
<feature type="domain" description="Beta/gamma crystallin 'Greek key' 1" evidence="3">
    <location>
        <begin position="6"/>
        <end position="44"/>
    </location>
</feature>
<feature type="domain" description="Beta/gamma crystallin 'Greek key' 2" evidence="3">
    <location>
        <begin position="45"/>
        <end position="87"/>
    </location>
</feature>
<feature type="domain" description="Beta/gamma crystallin 'Greek key' 3" evidence="3">
    <location>
        <begin position="94"/>
        <end position="134"/>
    </location>
</feature>
<feature type="domain" description="Beta/gamma crystallin 'Greek key' 4" evidence="3">
    <location>
        <begin position="135"/>
        <end position="177"/>
    </location>
</feature>
<feature type="region of interest" description="N-terminal arm">
    <location>
        <begin position="2"/>
        <end position="5"/>
    </location>
</feature>
<feature type="region of interest" description="Connecting peptide">
    <location>
        <begin position="88"/>
        <end position="93"/>
    </location>
</feature>
<feature type="modified residue" description="N-acetylserine" evidence="2">
    <location>
        <position position="2"/>
    </location>
</feature>
<feature type="strand" evidence="5">
    <location>
        <begin position="7"/>
        <end position="13"/>
    </location>
</feature>
<feature type="turn" evidence="5">
    <location>
        <begin position="14"/>
        <end position="16"/>
    </location>
</feature>
<feature type="strand" evidence="5">
    <location>
        <begin position="17"/>
        <end position="25"/>
    </location>
</feature>
<feature type="turn" evidence="5">
    <location>
        <begin position="31"/>
        <end position="33"/>
    </location>
</feature>
<feature type="strand" evidence="5">
    <location>
        <begin position="39"/>
        <end position="55"/>
    </location>
</feature>
<feature type="strand" evidence="5">
    <location>
        <begin position="59"/>
        <end position="62"/>
    </location>
</feature>
<feature type="strand" evidence="5">
    <location>
        <begin position="64"/>
        <end position="67"/>
    </location>
</feature>
<feature type="helix" evidence="5">
    <location>
        <begin position="70"/>
        <end position="73"/>
    </location>
</feature>
<feature type="strand" evidence="5">
    <location>
        <begin position="76"/>
        <end position="78"/>
    </location>
</feature>
<feature type="strand" evidence="5">
    <location>
        <begin position="82"/>
        <end position="86"/>
    </location>
</feature>
<feature type="strand" evidence="5">
    <location>
        <begin position="95"/>
        <end position="102"/>
    </location>
</feature>
<feature type="strand" evidence="5">
    <location>
        <begin position="106"/>
        <end position="113"/>
    </location>
</feature>
<feature type="helix" evidence="5">
    <location>
        <begin position="118"/>
        <end position="122"/>
    </location>
</feature>
<feature type="strand" evidence="5">
    <location>
        <begin position="129"/>
        <end position="135"/>
    </location>
</feature>
<feature type="strand" evidence="5">
    <location>
        <begin position="137"/>
        <end position="142"/>
    </location>
</feature>
<feature type="turn" evidence="5">
    <location>
        <begin position="143"/>
        <end position="145"/>
    </location>
</feature>
<feature type="strand" evidence="5">
    <location>
        <begin position="146"/>
        <end position="152"/>
    </location>
</feature>
<feature type="strand" evidence="5">
    <location>
        <begin position="154"/>
        <end position="159"/>
    </location>
</feature>
<feature type="helix" evidence="5">
    <location>
        <begin position="160"/>
        <end position="163"/>
    </location>
</feature>
<feature type="strand" evidence="5">
    <location>
        <begin position="166"/>
        <end position="168"/>
    </location>
</feature>
<feature type="strand" evidence="5">
    <location>
        <begin position="172"/>
        <end position="175"/>
    </location>
</feature>
<sequence length="178" mass="20850">MSKTGGKISFYEDRNFQGRRYDCDCDCADFRSYLSRCNSIRVEGGTWAVYERPNFSGHMYILPQGEYPEYQRWMGLNDRLGSCRAVHLSSGGQAKIQVFEKGDFNGQMYETTEDCPSIMEQFHLREIHSCKVVEGTWIFYELPNYRGRQYLLDKKEYRKPVDWGAASPAIQSFRRIVE</sequence>
<organism>
    <name type="scientific">Mus musculus</name>
    <name type="common">Mouse</name>
    <dbReference type="NCBI Taxonomy" id="10090"/>
    <lineage>
        <taxon>Eukaryota</taxon>
        <taxon>Metazoa</taxon>
        <taxon>Chordata</taxon>
        <taxon>Craniata</taxon>
        <taxon>Vertebrata</taxon>
        <taxon>Euteleostomi</taxon>
        <taxon>Mammalia</taxon>
        <taxon>Eutheria</taxon>
        <taxon>Euarchontoglires</taxon>
        <taxon>Glires</taxon>
        <taxon>Rodentia</taxon>
        <taxon>Myomorpha</taxon>
        <taxon>Muroidea</taxon>
        <taxon>Muridae</taxon>
        <taxon>Murinae</taxon>
        <taxon>Mus</taxon>
        <taxon>Mus</taxon>
    </lineage>
</organism>
<comment type="function">
    <text>Crystallins are the dominant structural components of the vertebrate eye lens.</text>
</comment>
<comment type="subunit">
    <text evidence="1">Monomer.</text>
</comment>
<comment type="domain">
    <text>Has a two-domain beta-structure, folded into four very similar Greek key motifs.</text>
</comment>
<comment type="similarity">
    <text evidence="4">Belongs to the beta/gamma-crystallin family.</text>
</comment>
<reference key="1">
    <citation type="journal article" date="1998" name="Mol. Vis.">
        <title>Cloning and mapping the mouse Crygs gene and non-lens expression of [gamma]S-crystallin.</title>
        <authorList>
            <person name="Sinha D."/>
            <person name="Esumi N."/>
            <person name="Jaworski C."/>
            <person name="Kozak C."/>
            <person name="Pierce E."/>
            <person name="Wistow G."/>
        </authorList>
    </citation>
    <scope>NUCLEOTIDE SEQUENCE [GENOMIC DNA / MRNA]</scope>
    <source>
        <strain>129/Sv</strain>
        <strain>FVB/N</strain>
        <tissue>Lens</tissue>
    </source>
</reference>
<reference key="2">
    <citation type="journal article" date="2004" name="Genome Res.">
        <title>The status, quality, and expansion of the NIH full-length cDNA project: the Mammalian Gene Collection (MGC).</title>
        <authorList>
            <consortium name="The MGC Project Team"/>
        </authorList>
    </citation>
    <scope>NUCLEOTIDE SEQUENCE [LARGE SCALE MRNA]</scope>
    <source>
        <strain>C57BL/6J</strain>
        <tissue>Brain</tissue>
    </source>
</reference>
<name>CRYGS_MOUSE</name>
<evidence type="ECO:0000250" key="1"/>
<evidence type="ECO:0000250" key="2">
    <source>
        <dbReference type="UniProtKB" id="P22914"/>
    </source>
</evidence>
<evidence type="ECO:0000255" key="3">
    <source>
        <dbReference type="PROSITE-ProRule" id="PRU00028"/>
    </source>
</evidence>
<evidence type="ECO:0000305" key="4"/>
<evidence type="ECO:0007829" key="5">
    <source>
        <dbReference type="PDB" id="6MYG"/>
    </source>
</evidence>
<keyword id="KW-0002">3D-structure</keyword>
<keyword id="KW-0007">Acetylation</keyword>
<keyword id="KW-0273">Eye lens protein</keyword>
<keyword id="KW-1185">Reference proteome</keyword>
<keyword id="KW-0677">Repeat</keyword>
<gene>
    <name type="primary">Crygs</name>
</gene>
<dbReference type="EMBL" id="AF032995">
    <property type="protein sequence ID" value="AAC53579.1"/>
    <property type="molecule type" value="mRNA"/>
</dbReference>
<dbReference type="EMBL" id="AF055703">
    <property type="protein sequence ID" value="AAC40120.1"/>
    <property type="molecule type" value="Genomic_DNA"/>
</dbReference>
<dbReference type="EMBL" id="AF055702">
    <property type="protein sequence ID" value="AAC40120.1"/>
    <property type="status" value="JOINED"/>
    <property type="molecule type" value="Genomic_DNA"/>
</dbReference>
<dbReference type="EMBL" id="BC056452">
    <property type="protein sequence ID" value="AAH56452.1"/>
    <property type="molecule type" value="mRNA"/>
</dbReference>
<dbReference type="CCDS" id="CCDS28069.1"/>
<dbReference type="RefSeq" id="NP_034097.1">
    <property type="nucleotide sequence ID" value="NM_009967.2"/>
</dbReference>
<dbReference type="PDB" id="1ZWM">
    <property type="method" value="NMR"/>
    <property type="chains" value="A=2-178"/>
</dbReference>
<dbReference type="PDB" id="1ZWO">
    <property type="method" value="NMR"/>
    <property type="chains" value="A=2-178"/>
</dbReference>
<dbReference type="PDB" id="2A5M">
    <property type="method" value="NMR"/>
    <property type="chains" value="A=2-178"/>
</dbReference>
<dbReference type="PDB" id="6MYG">
    <property type="method" value="X-ray"/>
    <property type="resolution" value="2.92 A"/>
    <property type="chains" value="A/B/C/D=1-178"/>
</dbReference>
<dbReference type="PDB" id="7RJ0">
    <property type="method" value="X-ray"/>
    <property type="resolution" value="2.92 A"/>
    <property type="chains" value="A/B/C/D=2-178"/>
</dbReference>
<dbReference type="PDBsum" id="1ZWM"/>
<dbReference type="PDBsum" id="1ZWO"/>
<dbReference type="PDBsum" id="2A5M"/>
<dbReference type="PDBsum" id="6MYG"/>
<dbReference type="PDBsum" id="7RJ0"/>
<dbReference type="SMR" id="O35486"/>
<dbReference type="BioGRID" id="198922">
    <property type="interactions" value="2"/>
</dbReference>
<dbReference type="FunCoup" id="O35486">
    <property type="interactions" value="8"/>
</dbReference>
<dbReference type="STRING" id="10090.ENSMUSP00000043588"/>
<dbReference type="PhosphoSitePlus" id="O35486"/>
<dbReference type="PaxDb" id="10090-ENSMUSP00000043588"/>
<dbReference type="ProteomicsDB" id="285305"/>
<dbReference type="Antibodypedia" id="33848">
    <property type="antibodies" value="217 antibodies from 23 providers"/>
</dbReference>
<dbReference type="DNASU" id="12970"/>
<dbReference type="Ensembl" id="ENSMUST00000040592.6">
    <property type="protein sequence ID" value="ENSMUSP00000043588.5"/>
    <property type="gene ID" value="ENSMUSG00000033501.6"/>
</dbReference>
<dbReference type="GeneID" id="12970"/>
<dbReference type="KEGG" id="mmu:12970"/>
<dbReference type="UCSC" id="uc007ysj.2">
    <property type="organism name" value="mouse"/>
</dbReference>
<dbReference type="AGR" id="MGI:1298216"/>
<dbReference type="CTD" id="1427"/>
<dbReference type="MGI" id="MGI:1298216">
    <property type="gene designation" value="Crygs"/>
</dbReference>
<dbReference type="VEuPathDB" id="HostDB:ENSMUSG00000033501"/>
<dbReference type="eggNOG" id="ENOG502QQAM">
    <property type="taxonomic scope" value="Eukaryota"/>
</dbReference>
<dbReference type="GeneTree" id="ENSGT00940000160342"/>
<dbReference type="HOGENOM" id="CLU_081883_1_1_1"/>
<dbReference type="InParanoid" id="O35486"/>
<dbReference type="OMA" id="SVMEEWH"/>
<dbReference type="OrthoDB" id="8407241at2759"/>
<dbReference type="PhylomeDB" id="O35486"/>
<dbReference type="BioGRID-ORCS" id="12970">
    <property type="hits" value="3 hits in 79 CRISPR screens"/>
</dbReference>
<dbReference type="EvolutionaryTrace" id="O35486"/>
<dbReference type="PRO" id="PR:O35486"/>
<dbReference type="Proteomes" id="UP000000589">
    <property type="component" value="Chromosome 16"/>
</dbReference>
<dbReference type="RNAct" id="O35486">
    <property type="molecule type" value="protein"/>
</dbReference>
<dbReference type="Bgee" id="ENSMUSG00000033501">
    <property type="expression patterns" value="Expressed in epithelium of lens and 32 other cell types or tissues"/>
</dbReference>
<dbReference type="ExpressionAtlas" id="O35486">
    <property type="expression patterns" value="baseline and differential"/>
</dbReference>
<dbReference type="GO" id="GO:0005212">
    <property type="term" value="F:structural constituent of eye lens"/>
    <property type="evidence" value="ECO:0000315"/>
    <property type="project" value="MGI"/>
</dbReference>
<dbReference type="GO" id="GO:0002088">
    <property type="term" value="P:lens development in camera-type eye"/>
    <property type="evidence" value="ECO:0000315"/>
    <property type="project" value="MGI"/>
</dbReference>
<dbReference type="GO" id="GO:0002009">
    <property type="term" value="P:morphogenesis of an epithelium"/>
    <property type="evidence" value="ECO:0000315"/>
    <property type="project" value="MGI"/>
</dbReference>
<dbReference type="FunFam" id="2.60.20.10:FF:000001">
    <property type="entry name" value="Crystallin gamma S"/>
    <property type="match status" value="1"/>
</dbReference>
<dbReference type="FunFam" id="2.60.20.10:FF:000003">
    <property type="entry name" value="Crystallin gamma S"/>
    <property type="match status" value="1"/>
</dbReference>
<dbReference type="Gene3D" id="2.60.20.10">
    <property type="entry name" value="Crystallins"/>
    <property type="match status" value="2"/>
</dbReference>
<dbReference type="InterPro" id="IPR050252">
    <property type="entry name" value="Beta/Gamma-Crystallin"/>
</dbReference>
<dbReference type="InterPro" id="IPR001064">
    <property type="entry name" value="Beta/gamma_crystallin"/>
</dbReference>
<dbReference type="InterPro" id="IPR011024">
    <property type="entry name" value="G_crystallin-like"/>
</dbReference>
<dbReference type="PANTHER" id="PTHR11818">
    <property type="entry name" value="BETA/GAMMA CRYSTALLIN"/>
    <property type="match status" value="1"/>
</dbReference>
<dbReference type="PANTHER" id="PTHR11818:SF6">
    <property type="entry name" value="GAMMA-CRYSTALLIN S"/>
    <property type="match status" value="1"/>
</dbReference>
<dbReference type="Pfam" id="PF00030">
    <property type="entry name" value="Crystall"/>
    <property type="match status" value="2"/>
</dbReference>
<dbReference type="PRINTS" id="PR01367">
    <property type="entry name" value="BGCRYSTALLIN"/>
</dbReference>
<dbReference type="SMART" id="SM00247">
    <property type="entry name" value="XTALbg"/>
    <property type="match status" value="2"/>
</dbReference>
<dbReference type="SUPFAM" id="SSF49695">
    <property type="entry name" value="gamma-Crystallin-like"/>
    <property type="match status" value="1"/>
</dbReference>
<dbReference type="PROSITE" id="PS50915">
    <property type="entry name" value="CRYSTALLIN_BETA_GAMMA"/>
    <property type="match status" value="4"/>
</dbReference>
<accession>O35486</accession>
<proteinExistence type="evidence at protein level"/>